<reference key="1">
    <citation type="submission" date="2007-05" db="EMBL/GenBank/DDBJ databases">
        <title>Complete sequence of chromosome of Staphylococcus aureus subsp. aureus JH9.</title>
        <authorList>
            <consortium name="US DOE Joint Genome Institute"/>
            <person name="Copeland A."/>
            <person name="Lucas S."/>
            <person name="Lapidus A."/>
            <person name="Barry K."/>
            <person name="Detter J.C."/>
            <person name="Glavina del Rio T."/>
            <person name="Hammon N."/>
            <person name="Israni S."/>
            <person name="Pitluck S."/>
            <person name="Chain P."/>
            <person name="Malfatti S."/>
            <person name="Shin M."/>
            <person name="Vergez L."/>
            <person name="Schmutz J."/>
            <person name="Larimer F."/>
            <person name="Land M."/>
            <person name="Hauser L."/>
            <person name="Kyrpides N."/>
            <person name="Kim E."/>
            <person name="Tomasz A."/>
            <person name="Richardson P."/>
        </authorList>
    </citation>
    <scope>NUCLEOTIDE SEQUENCE [LARGE SCALE GENOMIC DNA]</scope>
    <source>
        <strain>JH9</strain>
    </source>
</reference>
<dbReference type="EC" id="5.4.99.62" evidence="1"/>
<dbReference type="EMBL" id="CP000703">
    <property type="protein sequence ID" value="ABQ48061.1"/>
    <property type="molecule type" value="Genomic_DNA"/>
</dbReference>
<dbReference type="RefSeq" id="WP_000747873.1">
    <property type="nucleotide sequence ID" value="NC_009487.1"/>
</dbReference>
<dbReference type="SMR" id="A5IPD8"/>
<dbReference type="KEGG" id="saj:SaurJH9_0254"/>
<dbReference type="HOGENOM" id="CLU_135498_0_0_9"/>
<dbReference type="UniPathway" id="UPA00916">
    <property type="reaction ID" value="UER00888"/>
</dbReference>
<dbReference type="GO" id="GO:0005829">
    <property type="term" value="C:cytosol"/>
    <property type="evidence" value="ECO:0007669"/>
    <property type="project" value="TreeGrafter"/>
</dbReference>
<dbReference type="GO" id="GO:0062193">
    <property type="term" value="F:D-ribose pyranase activity"/>
    <property type="evidence" value="ECO:0007669"/>
    <property type="project" value="UniProtKB-EC"/>
</dbReference>
<dbReference type="GO" id="GO:0016872">
    <property type="term" value="F:intramolecular lyase activity"/>
    <property type="evidence" value="ECO:0007669"/>
    <property type="project" value="UniProtKB-UniRule"/>
</dbReference>
<dbReference type="GO" id="GO:0048029">
    <property type="term" value="F:monosaccharide binding"/>
    <property type="evidence" value="ECO:0007669"/>
    <property type="project" value="InterPro"/>
</dbReference>
<dbReference type="GO" id="GO:0019303">
    <property type="term" value="P:D-ribose catabolic process"/>
    <property type="evidence" value="ECO:0007669"/>
    <property type="project" value="UniProtKB-UniRule"/>
</dbReference>
<dbReference type="FunFam" id="3.40.1650.10:FF:000004">
    <property type="entry name" value="D-ribose pyranase"/>
    <property type="match status" value="1"/>
</dbReference>
<dbReference type="Gene3D" id="3.40.1650.10">
    <property type="entry name" value="RbsD-like domain"/>
    <property type="match status" value="1"/>
</dbReference>
<dbReference type="HAMAP" id="MF_01661">
    <property type="entry name" value="D_rib_pyranase"/>
    <property type="match status" value="1"/>
</dbReference>
<dbReference type="InterPro" id="IPR023064">
    <property type="entry name" value="D-ribose_pyranase"/>
</dbReference>
<dbReference type="InterPro" id="IPR023750">
    <property type="entry name" value="RbsD-like_sf"/>
</dbReference>
<dbReference type="InterPro" id="IPR007721">
    <property type="entry name" value="RbsD_FucU"/>
</dbReference>
<dbReference type="NCBIfam" id="NF008761">
    <property type="entry name" value="PRK11797.1"/>
    <property type="match status" value="1"/>
</dbReference>
<dbReference type="PANTHER" id="PTHR37831">
    <property type="entry name" value="D-RIBOSE PYRANASE"/>
    <property type="match status" value="1"/>
</dbReference>
<dbReference type="PANTHER" id="PTHR37831:SF1">
    <property type="entry name" value="D-RIBOSE PYRANASE"/>
    <property type="match status" value="1"/>
</dbReference>
<dbReference type="Pfam" id="PF05025">
    <property type="entry name" value="RbsD_FucU"/>
    <property type="match status" value="1"/>
</dbReference>
<dbReference type="SUPFAM" id="SSF102546">
    <property type="entry name" value="RbsD-like"/>
    <property type="match status" value="1"/>
</dbReference>
<sequence length="134" mass="15165">MKKSAVLNEHISKAIATIGHFDLLTINDAGMPIPNDHRRIDLAVTKNLPRFIDVLATVLEEMEIQKIYLAEEIKEHNPTQLQQIKQLISSEIEIIFIPHEEMKSNLAHPLNKGNIRTGETTPYSNIALESNVTF</sequence>
<name>RBSD_STAA9</name>
<comment type="function">
    <text evidence="1">Catalyzes the interconversion of beta-pyran and beta-furan forms of D-ribose.</text>
</comment>
<comment type="catalytic activity">
    <reaction evidence="1">
        <text>beta-D-ribopyranose = beta-D-ribofuranose</text>
        <dbReference type="Rhea" id="RHEA:25432"/>
        <dbReference type="ChEBI" id="CHEBI:27476"/>
        <dbReference type="ChEBI" id="CHEBI:47002"/>
        <dbReference type="EC" id="5.4.99.62"/>
    </reaction>
</comment>
<comment type="pathway">
    <text evidence="1">Carbohydrate metabolism; D-ribose degradation; D-ribose 5-phosphate from beta-D-ribopyranose: step 1/2.</text>
</comment>
<comment type="subunit">
    <text evidence="1">Homodecamer.</text>
</comment>
<comment type="subcellular location">
    <subcellularLocation>
        <location evidence="1">Cytoplasm</location>
    </subcellularLocation>
</comment>
<comment type="similarity">
    <text evidence="1">Belongs to the RbsD / FucU family. RbsD subfamily.</text>
</comment>
<organism>
    <name type="scientific">Staphylococcus aureus (strain JH9)</name>
    <dbReference type="NCBI Taxonomy" id="359786"/>
    <lineage>
        <taxon>Bacteria</taxon>
        <taxon>Bacillati</taxon>
        <taxon>Bacillota</taxon>
        <taxon>Bacilli</taxon>
        <taxon>Bacillales</taxon>
        <taxon>Staphylococcaceae</taxon>
        <taxon>Staphylococcus</taxon>
    </lineage>
</organism>
<proteinExistence type="inferred from homology"/>
<evidence type="ECO:0000255" key="1">
    <source>
        <dbReference type="HAMAP-Rule" id="MF_01661"/>
    </source>
</evidence>
<feature type="chain" id="PRO_0000346264" description="D-ribose pyranase">
    <location>
        <begin position="1"/>
        <end position="134"/>
    </location>
</feature>
<feature type="active site" description="Proton donor" evidence="1">
    <location>
        <position position="20"/>
    </location>
</feature>
<feature type="binding site" evidence="1">
    <location>
        <position position="28"/>
    </location>
    <ligand>
        <name>substrate</name>
    </ligand>
</feature>
<feature type="binding site" evidence="1">
    <location>
        <position position="99"/>
    </location>
    <ligand>
        <name>substrate</name>
    </ligand>
</feature>
<feature type="binding site" evidence="1">
    <location>
        <begin position="123"/>
        <end position="125"/>
    </location>
    <ligand>
        <name>substrate</name>
    </ligand>
</feature>
<protein>
    <recommendedName>
        <fullName evidence="1">D-ribose pyranase</fullName>
        <ecNumber evidence="1">5.4.99.62</ecNumber>
    </recommendedName>
</protein>
<accession>A5IPD8</accession>
<keyword id="KW-0119">Carbohydrate metabolism</keyword>
<keyword id="KW-0963">Cytoplasm</keyword>
<keyword id="KW-0413">Isomerase</keyword>
<gene>
    <name evidence="1" type="primary">rbsD</name>
    <name type="ordered locus">SaurJH9_0254</name>
</gene>